<feature type="chain" id="PRO_0000158400" description="Ribose-5-phosphate isomerase A">
    <location>
        <begin position="1"/>
        <end position="218"/>
    </location>
</feature>
<feature type="active site" description="Proton acceptor" evidence="1">
    <location>
        <position position="103"/>
    </location>
</feature>
<feature type="binding site" evidence="1">
    <location>
        <begin position="28"/>
        <end position="31"/>
    </location>
    <ligand>
        <name>substrate</name>
    </ligand>
</feature>
<feature type="binding site" evidence="1">
    <location>
        <begin position="81"/>
        <end position="84"/>
    </location>
    <ligand>
        <name>substrate</name>
    </ligand>
</feature>
<feature type="binding site" evidence="1">
    <location>
        <begin position="94"/>
        <end position="97"/>
    </location>
    <ligand>
        <name>substrate</name>
    </ligand>
</feature>
<feature type="binding site" evidence="1">
    <location>
        <position position="121"/>
    </location>
    <ligand>
        <name>substrate</name>
    </ligand>
</feature>
<dbReference type="EC" id="5.3.1.6" evidence="1"/>
<dbReference type="EMBL" id="AE016826">
    <property type="protein sequence ID" value="AAO27088.1"/>
    <property type="molecule type" value="Genomic_DNA"/>
</dbReference>
<dbReference type="RefSeq" id="WP_011091489.1">
    <property type="nucleotide sequence ID" value="NC_004545.1"/>
</dbReference>
<dbReference type="SMR" id="Q89AD5"/>
<dbReference type="STRING" id="224915.bbp_371"/>
<dbReference type="KEGG" id="bab:bbp_371"/>
<dbReference type="eggNOG" id="COG0120">
    <property type="taxonomic scope" value="Bacteria"/>
</dbReference>
<dbReference type="HOGENOM" id="CLU_056590_1_1_6"/>
<dbReference type="OrthoDB" id="5870696at2"/>
<dbReference type="UniPathway" id="UPA00115">
    <property type="reaction ID" value="UER00412"/>
</dbReference>
<dbReference type="Proteomes" id="UP000000601">
    <property type="component" value="Chromosome"/>
</dbReference>
<dbReference type="GO" id="GO:0005829">
    <property type="term" value="C:cytosol"/>
    <property type="evidence" value="ECO:0007669"/>
    <property type="project" value="TreeGrafter"/>
</dbReference>
<dbReference type="GO" id="GO:0004751">
    <property type="term" value="F:ribose-5-phosphate isomerase activity"/>
    <property type="evidence" value="ECO:0007669"/>
    <property type="project" value="UniProtKB-UniRule"/>
</dbReference>
<dbReference type="GO" id="GO:0006014">
    <property type="term" value="P:D-ribose metabolic process"/>
    <property type="evidence" value="ECO:0007669"/>
    <property type="project" value="TreeGrafter"/>
</dbReference>
<dbReference type="GO" id="GO:0009052">
    <property type="term" value="P:pentose-phosphate shunt, non-oxidative branch"/>
    <property type="evidence" value="ECO:0007669"/>
    <property type="project" value="UniProtKB-UniRule"/>
</dbReference>
<dbReference type="CDD" id="cd01398">
    <property type="entry name" value="RPI_A"/>
    <property type="match status" value="1"/>
</dbReference>
<dbReference type="FunFam" id="3.40.50.1360:FF:000001">
    <property type="entry name" value="Ribose-5-phosphate isomerase A"/>
    <property type="match status" value="1"/>
</dbReference>
<dbReference type="Gene3D" id="3.30.70.260">
    <property type="match status" value="1"/>
</dbReference>
<dbReference type="Gene3D" id="3.40.50.1360">
    <property type="match status" value="1"/>
</dbReference>
<dbReference type="HAMAP" id="MF_00170">
    <property type="entry name" value="Rib_5P_isom_A"/>
    <property type="match status" value="1"/>
</dbReference>
<dbReference type="InterPro" id="IPR037171">
    <property type="entry name" value="NagB/RpiA_transferase-like"/>
</dbReference>
<dbReference type="InterPro" id="IPR020672">
    <property type="entry name" value="Ribose5P_isomerase_typA_subgr"/>
</dbReference>
<dbReference type="InterPro" id="IPR004788">
    <property type="entry name" value="Ribose5P_isomerase_type_A"/>
</dbReference>
<dbReference type="NCBIfam" id="NF001924">
    <property type="entry name" value="PRK00702.1"/>
    <property type="match status" value="1"/>
</dbReference>
<dbReference type="NCBIfam" id="TIGR00021">
    <property type="entry name" value="rpiA"/>
    <property type="match status" value="1"/>
</dbReference>
<dbReference type="PANTHER" id="PTHR11934">
    <property type="entry name" value="RIBOSE-5-PHOSPHATE ISOMERASE"/>
    <property type="match status" value="1"/>
</dbReference>
<dbReference type="PANTHER" id="PTHR11934:SF0">
    <property type="entry name" value="RIBOSE-5-PHOSPHATE ISOMERASE"/>
    <property type="match status" value="1"/>
</dbReference>
<dbReference type="Pfam" id="PF06026">
    <property type="entry name" value="Rib_5-P_isom_A"/>
    <property type="match status" value="1"/>
</dbReference>
<dbReference type="SUPFAM" id="SSF75445">
    <property type="entry name" value="D-ribose-5-phosphate isomerase (RpiA), lid domain"/>
    <property type="match status" value="1"/>
</dbReference>
<dbReference type="SUPFAM" id="SSF100950">
    <property type="entry name" value="NagB/RpiA/CoA transferase-like"/>
    <property type="match status" value="1"/>
</dbReference>
<name>RPIA_BUCBP</name>
<accession>Q89AD5</accession>
<reference key="1">
    <citation type="journal article" date="2003" name="Proc. Natl. Acad. Sci. U.S.A.">
        <title>Reductive genome evolution in Buchnera aphidicola.</title>
        <authorList>
            <person name="van Ham R.C.H.J."/>
            <person name="Kamerbeek J."/>
            <person name="Palacios C."/>
            <person name="Rausell C."/>
            <person name="Abascal F."/>
            <person name="Bastolla U."/>
            <person name="Fernandez J.M."/>
            <person name="Jimenez L."/>
            <person name="Postigo M."/>
            <person name="Silva F.J."/>
            <person name="Tamames J."/>
            <person name="Viguera E."/>
            <person name="Latorre A."/>
            <person name="Valencia A."/>
            <person name="Moran F."/>
            <person name="Moya A."/>
        </authorList>
    </citation>
    <scope>NUCLEOTIDE SEQUENCE [LARGE SCALE GENOMIC DNA]</scope>
    <source>
        <strain>Bp</strain>
    </source>
</reference>
<gene>
    <name evidence="1" type="primary">rpiA</name>
    <name type="ordered locus">bbp_371</name>
</gene>
<comment type="function">
    <text evidence="1">Catalyzes the reversible conversion of ribose-5-phosphate to ribulose 5-phosphate.</text>
</comment>
<comment type="catalytic activity">
    <reaction evidence="1">
        <text>aldehydo-D-ribose 5-phosphate = D-ribulose 5-phosphate</text>
        <dbReference type="Rhea" id="RHEA:14657"/>
        <dbReference type="ChEBI" id="CHEBI:58121"/>
        <dbReference type="ChEBI" id="CHEBI:58273"/>
        <dbReference type="EC" id="5.3.1.6"/>
    </reaction>
</comment>
<comment type="pathway">
    <text evidence="1">Carbohydrate degradation; pentose phosphate pathway; D-ribose 5-phosphate from D-ribulose 5-phosphate (non-oxidative stage): step 1/1.</text>
</comment>
<comment type="subunit">
    <text evidence="1">Homodimer.</text>
</comment>
<comment type="similarity">
    <text evidence="1">Belongs to the ribose 5-phosphate isomerase family.</text>
</comment>
<sequence length="218" mass="23478">MKTNELKRLVARKVVDYINPGSVIGIGTGSTVSYFIEVLSTIKNLISGAVSSSNFSTACLKRIGIPIYDLSKINSLVLYIDSADEINPQLQMIKGGGAALTREKIIAATAEKFICIADESKQVEILGKVPLPIEIIPMARSYISNEIIKIGGMPKYRKNVITDNGNVIIDVFNLVITDPVCLENKINSFPGVVSVGLFATRKADIALIGTSSGVQVIY</sequence>
<keyword id="KW-0413">Isomerase</keyword>
<keyword id="KW-1185">Reference proteome</keyword>
<evidence type="ECO:0000255" key="1">
    <source>
        <dbReference type="HAMAP-Rule" id="MF_00170"/>
    </source>
</evidence>
<proteinExistence type="inferred from homology"/>
<organism>
    <name type="scientific">Buchnera aphidicola subsp. Baizongia pistaciae (strain Bp)</name>
    <dbReference type="NCBI Taxonomy" id="224915"/>
    <lineage>
        <taxon>Bacteria</taxon>
        <taxon>Pseudomonadati</taxon>
        <taxon>Pseudomonadota</taxon>
        <taxon>Gammaproteobacteria</taxon>
        <taxon>Enterobacterales</taxon>
        <taxon>Erwiniaceae</taxon>
        <taxon>Buchnera</taxon>
    </lineage>
</organism>
<protein>
    <recommendedName>
        <fullName evidence="1">Ribose-5-phosphate isomerase A</fullName>
        <ecNumber evidence="1">5.3.1.6</ecNumber>
    </recommendedName>
    <alternativeName>
        <fullName evidence="1">Phosphoriboisomerase A</fullName>
        <shortName evidence="1">PRI</shortName>
    </alternativeName>
</protein>